<sequence length="185" mass="20857">MATLPLSLIFAFKNRPKCVITRAQYVKVMAWQEVTAKRSNELGSPTRRKSSIQELVFLEDDVQALNEAFPQGEKADTSWAVTVLFYLAKLVFGILGLALSIIWLLHIIVFMLVNPPAFPFLNQVFIQLDSAWGLLGTTAFAIFCYYLIMSVISGEMHSIHPMKYQGTLMNSFLFNVAIILLCSTR</sequence>
<evidence type="ECO:0000250" key="1"/>
<evidence type="ECO:0000255" key="2"/>
<evidence type="ECO:0000305" key="3"/>
<keyword id="KW-1003">Cell membrane</keyword>
<keyword id="KW-0472">Membrane</keyword>
<keyword id="KW-1185">Reference proteome</keyword>
<keyword id="KW-0812">Transmembrane</keyword>
<keyword id="KW-1133">Transmembrane helix</keyword>
<dbReference type="EMBL" id="GL377586">
    <property type="protein sequence ID" value="EFJ25482.1"/>
    <property type="molecule type" value="Genomic_DNA"/>
</dbReference>
<dbReference type="RefSeq" id="XP_002973108.1">
    <property type="nucleotide sequence ID" value="XM_002973062.1"/>
</dbReference>
<dbReference type="SMR" id="D8RQM9"/>
<dbReference type="STRING" id="88036.D8RQM9"/>
<dbReference type="EnsemblPlants" id="EFJ25482">
    <property type="protein sequence ID" value="EFJ25482"/>
    <property type="gene ID" value="SELMODRAFT_413556"/>
</dbReference>
<dbReference type="Gramene" id="EFJ25482">
    <property type="protein sequence ID" value="EFJ25482"/>
    <property type="gene ID" value="SELMODRAFT_413556"/>
</dbReference>
<dbReference type="KEGG" id="smo:SELMODRAFT_413556"/>
<dbReference type="eggNOG" id="ENOG502QPKQ">
    <property type="taxonomic scope" value="Eukaryota"/>
</dbReference>
<dbReference type="HOGENOM" id="CLU_083163_0_0_1"/>
<dbReference type="InParanoid" id="D8RQM9"/>
<dbReference type="Proteomes" id="UP000001514">
    <property type="component" value="Unassembled WGS sequence"/>
</dbReference>
<dbReference type="GO" id="GO:0005886">
    <property type="term" value="C:plasma membrane"/>
    <property type="evidence" value="ECO:0007669"/>
    <property type="project" value="UniProtKB-SubCell"/>
</dbReference>
<dbReference type="InterPro" id="IPR006876">
    <property type="entry name" value="LMBR1-like_membr_prot"/>
</dbReference>
<dbReference type="PANTHER" id="PTHR31652">
    <property type="entry name" value="LIMR FAMILY PROTEIN DDB_G0283707-RELATED"/>
    <property type="match status" value="1"/>
</dbReference>
<dbReference type="PANTHER" id="PTHR31652:SF0">
    <property type="entry name" value="LIMR FAMILY PROTEIN DDB_G0283707-RELATED"/>
    <property type="match status" value="1"/>
</dbReference>
<dbReference type="Pfam" id="PF04791">
    <property type="entry name" value="LMBR1"/>
    <property type="match status" value="1"/>
</dbReference>
<proteinExistence type="inferred from homology"/>
<accession>D8RQM9</accession>
<reference key="1">
    <citation type="journal article" date="2011" name="Science">
        <title>The Selaginella genome identifies genetic changes associated with the evolution of vascular plants.</title>
        <authorList>
            <person name="Banks J.A."/>
            <person name="Nishiyama T."/>
            <person name="Hasebe M."/>
            <person name="Bowman J.L."/>
            <person name="Gribskov M."/>
            <person name="dePamphilis C."/>
            <person name="Albert V.A."/>
            <person name="Aono N."/>
            <person name="Aoyama T."/>
            <person name="Ambrose B.A."/>
            <person name="Ashton N.W."/>
            <person name="Axtell M.J."/>
            <person name="Barker E."/>
            <person name="Barker M.S."/>
            <person name="Bennetzen J.L."/>
            <person name="Bonawitz N.D."/>
            <person name="Chapple C."/>
            <person name="Cheng C."/>
            <person name="Correa L.G."/>
            <person name="Dacre M."/>
            <person name="DeBarry J."/>
            <person name="Dreyer I."/>
            <person name="Elias M."/>
            <person name="Engstrom E.M."/>
            <person name="Estelle M."/>
            <person name="Feng L."/>
            <person name="Finet C."/>
            <person name="Floyd S.K."/>
            <person name="Frommer W.B."/>
            <person name="Fujita T."/>
            <person name="Gramzow L."/>
            <person name="Gutensohn M."/>
            <person name="Harholt J."/>
            <person name="Hattori M."/>
            <person name="Heyl A."/>
            <person name="Hirai T."/>
            <person name="Hiwatashi Y."/>
            <person name="Ishikawa M."/>
            <person name="Iwata M."/>
            <person name="Karol K.G."/>
            <person name="Koehler B."/>
            <person name="Kolukisaoglu U."/>
            <person name="Kubo M."/>
            <person name="Kurata T."/>
            <person name="Lalonde S."/>
            <person name="Li K."/>
            <person name="Li Y."/>
            <person name="Litt A."/>
            <person name="Lyons E."/>
            <person name="Manning G."/>
            <person name="Maruyama T."/>
            <person name="Michael T.P."/>
            <person name="Mikami K."/>
            <person name="Miyazaki S."/>
            <person name="Morinaga S."/>
            <person name="Murata T."/>
            <person name="Mueller-Roeber B."/>
            <person name="Nelson D.R."/>
            <person name="Obara M."/>
            <person name="Oguri Y."/>
            <person name="Olmstead R.G."/>
            <person name="Onodera N."/>
            <person name="Petersen B.L."/>
            <person name="Pils B."/>
            <person name="Prigge M."/>
            <person name="Rensing S.A."/>
            <person name="Riano-Pachon D.M."/>
            <person name="Roberts A.W."/>
            <person name="Sato Y."/>
            <person name="Scheller H.V."/>
            <person name="Schulz B."/>
            <person name="Schulz C."/>
            <person name="Shakirov E.V."/>
            <person name="Shibagaki N."/>
            <person name="Shinohara N."/>
            <person name="Shippen D.E."/>
            <person name="Soerensen I."/>
            <person name="Sotooka R."/>
            <person name="Sugimoto N."/>
            <person name="Sugita M."/>
            <person name="Sumikawa N."/>
            <person name="Tanurdzic M."/>
            <person name="Theissen G."/>
            <person name="Ulvskov P."/>
            <person name="Wakazuki S."/>
            <person name="Weng J.K."/>
            <person name="Willats W.W."/>
            <person name="Wipf D."/>
            <person name="Wolf P.G."/>
            <person name="Yang L."/>
            <person name="Zimmer A.D."/>
            <person name="Zhu Q."/>
            <person name="Mitros T."/>
            <person name="Hellsten U."/>
            <person name="Loque D."/>
            <person name="Otillar R."/>
            <person name="Salamov A."/>
            <person name="Schmutz J."/>
            <person name="Shapiro H."/>
            <person name="Lindquist E."/>
            <person name="Lucas S."/>
            <person name="Rokhsar D."/>
            <person name="Grigoriev I.V."/>
        </authorList>
    </citation>
    <scope>NUCLEOTIDE SEQUENCE [LARGE SCALE GENOMIC DNA]</scope>
</reference>
<name>CSPLJ_SELML</name>
<protein>
    <recommendedName>
        <fullName>CASP-like protein SELMODRAFT_413556</fullName>
    </recommendedName>
</protein>
<feature type="chain" id="PRO_0000418711" description="CASP-like protein SELMODRAFT_413556">
    <location>
        <begin position="1"/>
        <end position="185"/>
    </location>
</feature>
<feature type="topological domain" description="Cytoplasmic" evidence="2">
    <location>
        <begin position="1"/>
        <end position="89"/>
    </location>
</feature>
<feature type="transmembrane region" description="Helical" evidence="2">
    <location>
        <begin position="90"/>
        <end position="110"/>
    </location>
</feature>
<feature type="topological domain" description="Extracellular" evidence="2">
    <location>
        <begin position="111"/>
        <end position="131"/>
    </location>
</feature>
<feature type="transmembrane region" description="Helical" evidence="2">
    <location>
        <begin position="132"/>
        <end position="152"/>
    </location>
</feature>
<feature type="topological domain" description="Cytoplasmic" evidence="2">
    <location>
        <begin position="153"/>
        <end position="163"/>
    </location>
</feature>
<feature type="transmembrane region" description="Helical" evidence="2">
    <location>
        <begin position="164"/>
        <end position="184"/>
    </location>
</feature>
<feature type="topological domain" description="Extracellular" evidence="2">
    <location>
        <position position="185"/>
    </location>
</feature>
<comment type="subunit">
    <text evidence="1">Homodimer and heterodimers.</text>
</comment>
<comment type="subcellular location">
    <subcellularLocation>
        <location evidence="1">Cell membrane</location>
        <topology evidence="1">Multi-pass membrane protein</topology>
    </subcellularLocation>
</comment>
<comment type="similarity">
    <text evidence="3">Belongs to the Casparian strip membrane proteins (CASP) family.</text>
</comment>
<gene>
    <name type="ORF">SELMODRAFT_413556</name>
</gene>
<organism>
    <name type="scientific">Selaginella moellendorffii</name>
    <name type="common">Spikemoss</name>
    <dbReference type="NCBI Taxonomy" id="88036"/>
    <lineage>
        <taxon>Eukaryota</taxon>
        <taxon>Viridiplantae</taxon>
        <taxon>Streptophyta</taxon>
        <taxon>Embryophyta</taxon>
        <taxon>Tracheophyta</taxon>
        <taxon>Lycopodiopsida</taxon>
        <taxon>Selaginellales</taxon>
        <taxon>Selaginellaceae</taxon>
        <taxon>Selaginella</taxon>
    </lineage>
</organism>